<comment type="function">
    <text evidence="1">Located at the top of the head of the 30S subunit, it contacts several helices of the 16S rRNA. In the 70S ribosome it contacts the 23S rRNA (bridge B1a) and protein L5 of the 50S subunit (bridge B1b), connecting the 2 subunits; these bridges are implicated in subunit movement. Contacts the tRNAs in the A and P-sites.</text>
</comment>
<comment type="subunit">
    <text evidence="1">Part of the 30S ribosomal subunit. Forms a loose heterodimer with protein S19. Forms two bridges to the 50S subunit in the 70S ribosome.</text>
</comment>
<comment type="similarity">
    <text evidence="1">Belongs to the universal ribosomal protein uS13 family.</text>
</comment>
<dbReference type="EMBL" id="CP000243">
    <property type="protein sequence ID" value="ABE09181.1"/>
    <property type="molecule type" value="Genomic_DNA"/>
</dbReference>
<dbReference type="RefSeq" id="WP_000090775.1">
    <property type="nucleotide sequence ID" value="NZ_CP064825.1"/>
</dbReference>
<dbReference type="SMR" id="Q1R633"/>
<dbReference type="GeneID" id="93778689"/>
<dbReference type="KEGG" id="eci:UTI89_C3744"/>
<dbReference type="HOGENOM" id="CLU_103849_1_2_6"/>
<dbReference type="Proteomes" id="UP000001952">
    <property type="component" value="Chromosome"/>
</dbReference>
<dbReference type="GO" id="GO:0005829">
    <property type="term" value="C:cytosol"/>
    <property type="evidence" value="ECO:0007669"/>
    <property type="project" value="TreeGrafter"/>
</dbReference>
<dbReference type="GO" id="GO:0015935">
    <property type="term" value="C:small ribosomal subunit"/>
    <property type="evidence" value="ECO:0007669"/>
    <property type="project" value="TreeGrafter"/>
</dbReference>
<dbReference type="GO" id="GO:0019843">
    <property type="term" value="F:rRNA binding"/>
    <property type="evidence" value="ECO:0007669"/>
    <property type="project" value="UniProtKB-UniRule"/>
</dbReference>
<dbReference type="GO" id="GO:0003735">
    <property type="term" value="F:structural constituent of ribosome"/>
    <property type="evidence" value="ECO:0007669"/>
    <property type="project" value="InterPro"/>
</dbReference>
<dbReference type="GO" id="GO:0000049">
    <property type="term" value="F:tRNA binding"/>
    <property type="evidence" value="ECO:0007669"/>
    <property type="project" value="UniProtKB-UniRule"/>
</dbReference>
<dbReference type="GO" id="GO:0006412">
    <property type="term" value="P:translation"/>
    <property type="evidence" value="ECO:0007669"/>
    <property type="project" value="UniProtKB-UniRule"/>
</dbReference>
<dbReference type="FunFam" id="1.10.8.50:FF:000001">
    <property type="entry name" value="30S ribosomal protein S13"/>
    <property type="match status" value="1"/>
</dbReference>
<dbReference type="FunFam" id="4.10.910.10:FF:000001">
    <property type="entry name" value="30S ribosomal protein S13"/>
    <property type="match status" value="1"/>
</dbReference>
<dbReference type="Gene3D" id="1.10.8.50">
    <property type="match status" value="1"/>
</dbReference>
<dbReference type="Gene3D" id="4.10.910.10">
    <property type="entry name" value="30s ribosomal protein s13, domain 2"/>
    <property type="match status" value="1"/>
</dbReference>
<dbReference type="HAMAP" id="MF_01315">
    <property type="entry name" value="Ribosomal_uS13"/>
    <property type="match status" value="1"/>
</dbReference>
<dbReference type="InterPro" id="IPR027437">
    <property type="entry name" value="Rbsml_uS13_C"/>
</dbReference>
<dbReference type="InterPro" id="IPR001892">
    <property type="entry name" value="Ribosomal_uS13"/>
</dbReference>
<dbReference type="InterPro" id="IPR010979">
    <property type="entry name" value="Ribosomal_uS13-like_H2TH"/>
</dbReference>
<dbReference type="InterPro" id="IPR019980">
    <property type="entry name" value="Ribosomal_uS13_bac-type"/>
</dbReference>
<dbReference type="InterPro" id="IPR018269">
    <property type="entry name" value="Ribosomal_uS13_CS"/>
</dbReference>
<dbReference type="NCBIfam" id="TIGR03631">
    <property type="entry name" value="uS13_bact"/>
    <property type="match status" value="1"/>
</dbReference>
<dbReference type="PANTHER" id="PTHR10871">
    <property type="entry name" value="30S RIBOSOMAL PROTEIN S13/40S RIBOSOMAL PROTEIN S18"/>
    <property type="match status" value="1"/>
</dbReference>
<dbReference type="PANTHER" id="PTHR10871:SF1">
    <property type="entry name" value="SMALL RIBOSOMAL SUBUNIT PROTEIN US13M"/>
    <property type="match status" value="1"/>
</dbReference>
<dbReference type="Pfam" id="PF00416">
    <property type="entry name" value="Ribosomal_S13"/>
    <property type="match status" value="1"/>
</dbReference>
<dbReference type="PIRSF" id="PIRSF002134">
    <property type="entry name" value="Ribosomal_S13"/>
    <property type="match status" value="1"/>
</dbReference>
<dbReference type="SUPFAM" id="SSF46946">
    <property type="entry name" value="S13-like H2TH domain"/>
    <property type="match status" value="1"/>
</dbReference>
<dbReference type="PROSITE" id="PS00646">
    <property type="entry name" value="RIBOSOMAL_S13_1"/>
    <property type="match status" value="1"/>
</dbReference>
<dbReference type="PROSITE" id="PS50159">
    <property type="entry name" value="RIBOSOMAL_S13_2"/>
    <property type="match status" value="1"/>
</dbReference>
<reference key="1">
    <citation type="journal article" date="2006" name="Proc. Natl. Acad. Sci. U.S.A.">
        <title>Identification of genes subject to positive selection in uropathogenic strains of Escherichia coli: a comparative genomics approach.</title>
        <authorList>
            <person name="Chen S.L."/>
            <person name="Hung C.-S."/>
            <person name="Xu J."/>
            <person name="Reigstad C.S."/>
            <person name="Magrini V."/>
            <person name="Sabo A."/>
            <person name="Blasiar D."/>
            <person name="Bieri T."/>
            <person name="Meyer R.R."/>
            <person name="Ozersky P."/>
            <person name="Armstrong J.R."/>
            <person name="Fulton R.S."/>
            <person name="Latreille J.P."/>
            <person name="Spieth J."/>
            <person name="Hooton T.M."/>
            <person name="Mardis E.R."/>
            <person name="Hultgren S.J."/>
            <person name="Gordon J.I."/>
        </authorList>
    </citation>
    <scope>NUCLEOTIDE SEQUENCE [LARGE SCALE GENOMIC DNA]</scope>
    <source>
        <strain>UTI89 / UPEC</strain>
    </source>
</reference>
<name>RS13_ECOUT</name>
<evidence type="ECO:0000255" key="1">
    <source>
        <dbReference type="HAMAP-Rule" id="MF_01315"/>
    </source>
</evidence>
<evidence type="ECO:0000256" key="2">
    <source>
        <dbReference type="SAM" id="MobiDB-lite"/>
    </source>
</evidence>
<evidence type="ECO:0000305" key="3"/>
<keyword id="KW-0687">Ribonucleoprotein</keyword>
<keyword id="KW-0689">Ribosomal protein</keyword>
<keyword id="KW-0694">RNA-binding</keyword>
<keyword id="KW-0699">rRNA-binding</keyword>
<keyword id="KW-0820">tRNA-binding</keyword>
<gene>
    <name evidence="1" type="primary">rpsM</name>
    <name type="ordered locus">UTI89_C3744</name>
</gene>
<protein>
    <recommendedName>
        <fullName evidence="1">Small ribosomal subunit protein uS13</fullName>
    </recommendedName>
    <alternativeName>
        <fullName evidence="3">30S ribosomal protein S13</fullName>
    </alternativeName>
</protein>
<proteinExistence type="inferred from homology"/>
<accession>Q1R633</accession>
<sequence>MARIAGINIPDHKHAVIALTSIYGVGKTRSKAILAAAGIAEDVKISELSEGQIDTLRDEVAKFVVEGDLRREISMSIKRLMDLGCYRGLRHRRGLPVRGQRTKTNARTRKGPRKPIKK</sequence>
<feature type="chain" id="PRO_0000306600" description="Small ribosomal subunit protein uS13">
    <location>
        <begin position="1"/>
        <end position="118"/>
    </location>
</feature>
<feature type="region of interest" description="Disordered" evidence="2">
    <location>
        <begin position="94"/>
        <end position="118"/>
    </location>
</feature>
<organism>
    <name type="scientific">Escherichia coli (strain UTI89 / UPEC)</name>
    <dbReference type="NCBI Taxonomy" id="364106"/>
    <lineage>
        <taxon>Bacteria</taxon>
        <taxon>Pseudomonadati</taxon>
        <taxon>Pseudomonadota</taxon>
        <taxon>Gammaproteobacteria</taxon>
        <taxon>Enterobacterales</taxon>
        <taxon>Enterobacteriaceae</taxon>
        <taxon>Escherichia</taxon>
    </lineage>
</organism>